<dbReference type="EMBL" id="CU928164">
    <property type="protein sequence ID" value="CAR20474.1"/>
    <property type="molecule type" value="Genomic_DNA"/>
</dbReference>
<dbReference type="RefSeq" id="WP_001085926.1">
    <property type="nucleotide sequence ID" value="NC_011750.1"/>
</dbReference>
<dbReference type="RefSeq" id="YP_002410242.1">
    <property type="nucleotide sequence ID" value="NC_011750.1"/>
</dbReference>
<dbReference type="SMR" id="B7NRR1"/>
<dbReference type="STRING" id="585057.ECIAI39_4368"/>
<dbReference type="GeneID" id="93777911"/>
<dbReference type="KEGG" id="ect:ECIAI39_4368"/>
<dbReference type="PATRIC" id="fig|585057.6.peg.4514"/>
<dbReference type="HOGENOM" id="CLU_074237_2_0_6"/>
<dbReference type="Proteomes" id="UP000000749">
    <property type="component" value="Chromosome"/>
</dbReference>
<dbReference type="GO" id="GO:0022625">
    <property type="term" value="C:cytosolic large ribosomal subunit"/>
    <property type="evidence" value="ECO:0007669"/>
    <property type="project" value="TreeGrafter"/>
</dbReference>
<dbReference type="GO" id="GO:0070180">
    <property type="term" value="F:large ribosomal subunit rRNA binding"/>
    <property type="evidence" value="ECO:0007669"/>
    <property type="project" value="UniProtKB-UniRule"/>
</dbReference>
<dbReference type="GO" id="GO:0003735">
    <property type="term" value="F:structural constituent of ribosome"/>
    <property type="evidence" value="ECO:0007669"/>
    <property type="project" value="InterPro"/>
</dbReference>
<dbReference type="GO" id="GO:0006412">
    <property type="term" value="P:translation"/>
    <property type="evidence" value="ECO:0007669"/>
    <property type="project" value="UniProtKB-UniRule"/>
</dbReference>
<dbReference type="CDD" id="cd00349">
    <property type="entry name" value="Ribosomal_L11"/>
    <property type="match status" value="1"/>
</dbReference>
<dbReference type="FunFam" id="1.10.10.250:FF:000001">
    <property type="entry name" value="50S ribosomal protein L11"/>
    <property type="match status" value="1"/>
</dbReference>
<dbReference type="FunFam" id="3.30.1550.10:FF:000001">
    <property type="entry name" value="50S ribosomal protein L11"/>
    <property type="match status" value="1"/>
</dbReference>
<dbReference type="Gene3D" id="1.10.10.250">
    <property type="entry name" value="Ribosomal protein L11, C-terminal domain"/>
    <property type="match status" value="1"/>
</dbReference>
<dbReference type="Gene3D" id="3.30.1550.10">
    <property type="entry name" value="Ribosomal protein L11/L12, N-terminal domain"/>
    <property type="match status" value="1"/>
</dbReference>
<dbReference type="HAMAP" id="MF_00736">
    <property type="entry name" value="Ribosomal_uL11"/>
    <property type="match status" value="1"/>
</dbReference>
<dbReference type="InterPro" id="IPR000911">
    <property type="entry name" value="Ribosomal_uL11"/>
</dbReference>
<dbReference type="InterPro" id="IPR006519">
    <property type="entry name" value="Ribosomal_uL11_bac-typ"/>
</dbReference>
<dbReference type="InterPro" id="IPR020783">
    <property type="entry name" value="Ribosomal_uL11_C"/>
</dbReference>
<dbReference type="InterPro" id="IPR036769">
    <property type="entry name" value="Ribosomal_uL11_C_sf"/>
</dbReference>
<dbReference type="InterPro" id="IPR020785">
    <property type="entry name" value="Ribosomal_uL11_CS"/>
</dbReference>
<dbReference type="InterPro" id="IPR020784">
    <property type="entry name" value="Ribosomal_uL11_N"/>
</dbReference>
<dbReference type="InterPro" id="IPR036796">
    <property type="entry name" value="Ribosomal_uL11_N_sf"/>
</dbReference>
<dbReference type="NCBIfam" id="TIGR01632">
    <property type="entry name" value="L11_bact"/>
    <property type="match status" value="1"/>
</dbReference>
<dbReference type="PANTHER" id="PTHR11661">
    <property type="entry name" value="60S RIBOSOMAL PROTEIN L12"/>
    <property type="match status" value="1"/>
</dbReference>
<dbReference type="PANTHER" id="PTHR11661:SF1">
    <property type="entry name" value="LARGE RIBOSOMAL SUBUNIT PROTEIN UL11M"/>
    <property type="match status" value="1"/>
</dbReference>
<dbReference type="Pfam" id="PF00298">
    <property type="entry name" value="Ribosomal_L11"/>
    <property type="match status" value="1"/>
</dbReference>
<dbReference type="Pfam" id="PF03946">
    <property type="entry name" value="Ribosomal_L11_N"/>
    <property type="match status" value="1"/>
</dbReference>
<dbReference type="SMART" id="SM00649">
    <property type="entry name" value="RL11"/>
    <property type="match status" value="1"/>
</dbReference>
<dbReference type="SUPFAM" id="SSF54747">
    <property type="entry name" value="Ribosomal L11/L12e N-terminal domain"/>
    <property type="match status" value="1"/>
</dbReference>
<dbReference type="SUPFAM" id="SSF46906">
    <property type="entry name" value="Ribosomal protein L11, C-terminal domain"/>
    <property type="match status" value="1"/>
</dbReference>
<dbReference type="PROSITE" id="PS00359">
    <property type="entry name" value="RIBOSOMAL_L11"/>
    <property type="match status" value="1"/>
</dbReference>
<reference key="1">
    <citation type="journal article" date="2009" name="PLoS Genet.">
        <title>Organised genome dynamics in the Escherichia coli species results in highly diverse adaptive paths.</title>
        <authorList>
            <person name="Touchon M."/>
            <person name="Hoede C."/>
            <person name="Tenaillon O."/>
            <person name="Barbe V."/>
            <person name="Baeriswyl S."/>
            <person name="Bidet P."/>
            <person name="Bingen E."/>
            <person name="Bonacorsi S."/>
            <person name="Bouchier C."/>
            <person name="Bouvet O."/>
            <person name="Calteau A."/>
            <person name="Chiapello H."/>
            <person name="Clermont O."/>
            <person name="Cruveiller S."/>
            <person name="Danchin A."/>
            <person name="Diard M."/>
            <person name="Dossat C."/>
            <person name="Karoui M.E."/>
            <person name="Frapy E."/>
            <person name="Garry L."/>
            <person name="Ghigo J.M."/>
            <person name="Gilles A.M."/>
            <person name="Johnson J."/>
            <person name="Le Bouguenec C."/>
            <person name="Lescat M."/>
            <person name="Mangenot S."/>
            <person name="Martinez-Jehanne V."/>
            <person name="Matic I."/>
            <person name="Nassif X."/>
            <person name="Oztas S."/>
            <person name="Petit M.A."/>
            <person name="Pichon C."/>
            <person name="Rouy Z."/>
            <person name="Ruf C.S."/>
            <person name="Schneider D."/>
            <person name="Tourret J."/>
            <person name="Vacherie B."/>
            <person name="Vallenet D."/>
            <person name="Medigue C."/>
            <person name="Rocha E.P.C."/>
            <person name="Denamur E."/>
        </authorList>
    </citation>
    <scope>NUCLEOTIDE SEQUENCE [LARGE SCALE GENOMIC DNA]</scope>
    <source>
        <strain>IAI39 / ExPEC</strain>
    </source>
</reference>
<proteinExistence type="inferred from homology"/>
<sequence>MAKKVQAYVKLQVAAGMANPSPPVGPALGQQGVNIMEFCKAFNAKTDSIEKGLPIPVVITVYADRSFTFVTKTPPAAVLLKKAAGIKSGSGKPNKDKVGKISRAQLQEIAQTKAADMTGADIEAMTRSIEGTARSMGLVVED</sequence>
<keyword id="KW-0488">Methylation</keyword>
<keyword id="KW-0687">Ribonucleoprotein</keyword>
<keyword id="KW-0689">Ribosomal protein</keyword>
<keyword id="KW-0694">RNA-binding</keyword>
<keyword id="KW-0699">rRNA-binding</keyword>
<gene>
    <name evidence="1" type="primary">rplK</name>
    <name type="ordered locus">ECIAI39_4368</name>
</gene>
<evidence type="ECO:0000255" key="1">
    <source>
        <dbReference type="HAMAP-Rule" id="MF_00736"/>
    </source>
</evidence>
<evidence type="ECO:0000305" key="2"/>
<comment type="function">
    <text evidence="1">Forms part of the ribosomal stalk which helps the ribosome interact with GTP-bound translation factors.</text>
</comment>
<comment type="subunit">
    <text evidence="1">Part of the ribosomal stalk of the 50S ribosomal subunit. Interacts with L10 and the large rRNA to form the base of the stalk. L10 forms an elongated spine to which L12 dimers bind in a sequential fashion forming a multimeric L10(L12)X complex.</text>
</comment>
<comment type="PTM">
    <text evidence="1">One or more lysine residues are methylated.</text>
</comment>
<comment type="similarity">
    <text evidence="1">Belongs to the universal ribosomal protein uL11 family.</text>
</comment>
<name>RL11_ECO7I</name>
<accession>B7NRR1</accession>
<organism>
    <name type="scientific">Escherichia coli O7:K1 (strain IAI39 / ExPEC)</name>
    <dbReference type="NCBI Taxonomy" id="585057"/>
    <lineage>
        <taxon>Bacteria</taxon>
        <taxon>Pseudomonadati</taxon>
        <taxon>Pseudomonadota</taxon>
        <taxon>Gammaproteobacteria</taxon>
        <taxon>Enterobacterales</taxon>
        <taxon>Enterobacteriaceae</taxon>
        <taxon>Escherichia</taxon>
    </lineage>
</organism>
<feature type="chain" id="PRO_1000195635" description="Large ribosomal subunit protein uL11">
    <location>
        <begin position="1"/>
        <end position="142"/>
    </location>
</feature>
<protein>
    <recommendedName>
        <fullName evidence="1">Large ribosomal subunit protein uL11</fullName>
    </recommendedName>
    <alternativeName>
        <fullName evidence="2">50S ribosomal protein L11</fullName>
    </alternativeName>
</protein>